<comment type="catalytic activity">
    <reaction evidence="1">
        <text>(S)-4-amino-5-oxopentanoate = 5-aminolevulinate</text>
        <dbReference type="Rhea" id="RHEA:14265"/>
        <dbReference type="ChEBI" id="CHEBI:57501"/>
        <dbReference type="ChEBI" id="CHEBI:356416"/>
        <dbReference type="EC" id="5.4.3.8"/>
    </reaction>
</comment>
<comment type="cofactor">
    <cofactor evidence="1">
        <name>pyridoxal 5'-phosphate</name>
        <dbReference type="ChEBI" id="CHEBI:597326"/>
    </cofactor>
</comment>
<comment type="pathway">
    <text evidence="1">Porphyrin-containing compound metabolism; protoporphyrin-IX biosynthesis; 5-aminolevulinate from L-glutamyl-tRNA(Glu): step 2/2.</text>
</comment>
<comment type="subunit">
    <text evidence="1">Homodimer.</text>
</comment>
<comment type="subcellular location">
    <subcellularLocation>
        <location evidence="1">Cytoplasm</location>
    </subcellularLocation>
</comment>
<comment type="similarity">
    <text evidence="1">Belongs to the class-III pyridoxal-phosphate-dependent aminotransferase family. HemL subfamily.</text>
</comment>
<reference key="1">
    <citation type="journal article" date="2009" name="J. Bacteriol.">
        <title>Complete and draft genome sequences of six members of the Aquificales.</title>
        <authorList>
            <person name="Reysenbach A.-L."/>
            <person name="Hamamura N."/>
            <person name="Podar M."/>
            <person name="Griffiths E."/>
            <person name="Ferreira S."/>
            <person name="Hochstein R."/>
            <person name="Heidelberg J."/>
            <person name="Johnson J."/>
            <person name="Mead D."/>
            <person name="Pohorille A."/>
            <person name="Sarmiento M."/>
            <person name="Schweighofer K."/>
            <person name="Seshadri R."/>
            <person name="Voytek M.A."/>
        </authorList>
    </citation>
    <scope>NUCLEOTIDE SEQUENCE [LARGE SCALE GENOMIC DNA]</scope>
    <source>
        <strain>DSM 14350 / EX-H1</strain>
    </source>
</reference>
<protein>
    <recommendedName>
        <fullName evidence="1">Glutamate-1-semialdehyde 2,1-aminomutase</fullName>
        <shortName evidence="1">GSA</shortName>
        <ecNumber evidence="1">5.4.3.8</ecNumber>
    </recommendedName>
    <alternativeName>
        <fullName evidence="1">Glutamate-1-semialdehyde aminotransferase</fullName>
        <shortName evidence="1">GSA-AT</shortName>
    </alternativeName>
</protein>
<proteinExistence type="inferred from homology"/>
<keyword id="KW-0963">Cytoplasm</keyword>
<keyword id="KW-0413">Isomerase</keyword>
<keyword id="KW-0627">Porphyrin biosynthesis</keyword>
<keyword id="KW-0663">Pyridoxal phosphate</keyword>
<keyword id="KW-1185">Reference proteome</keyword>
<sequence length="428" mass="46832">MKMERSLNLFEEAQRYLVGGVNSPVRAFKSVGMEPLFIQKGKGSRVWDVDGNEYIDYVLSWGPLILGHANDQIVNAIKQVANYGTSFGAPTELEIEMAKAVVDAVPSIEMVRFVNSGTEATMSAIRLARGYTGKKKIVKFEGCYHGHVDSLLVSAGSGVATLSIPGTPGIPEEFANLTIVLPYNNIDAVEETFKKHGDDIACVIIEPVAGNMGVVAPSKEYHQRLREITKEYGALLIWDEVMTGFRLAYGGAQELYGIEPDLTTLGKVIGGGLPVGAYGGKREIMEYVAPVGPVYQAGTLSGNPLAMAGGLRQLQILKEKNPYPDLDRKGKKLEEGLRYLSEKYGIPATVNRVGSMITAFFTDKEVVDFETAKSSDLDRFAKFFRLMLEKGVYLAPSQFEAAFLSTAHSDEDIDETLNKAEDCFKQLL</sequence>
<gene>
    <name evidence="1" type="primary">hemL</name>
    <name type="ordered locus">PERMA_1058</name>
</gene>
<dbReference type="EC" id="5.4.3.8" evidence="1"/>
<dbReference type="EMBL" id="CP001230">
    <property type="protein sequence ID" value="ACO04242.1"/>
    <property type="molecule type" value="Genomic_DNA"/>
</dbReference>
<dbReference type="RefSeq" id="WP_012676480.1">
    <property type="nucleotide sequence ID" value="NC_012440.1"/>
</dbReference>
<dbReference type="SMR" id="C0QQ98"/>
<dbReference type="STRING" id="123214.PERMA_1058"/>
<dbReference type="PaxDb" id="123214-PERMA_1058"/>
<dbReference type="KEGG" id="pmx:PERMA_1058"/>
<dbReference type="eggNOG" id="COG0001">
    <property type="taxonomic scope" value="Bacteria"/>
</dbReference>
<dbReference type="HOGENOM" id="CLU_016922_1_5_0"/>
<dbReference type="OrthoDB" id="9807885at2"/>
<dbReference type="UniPathway" id="UPA00251">
    <property type="reaction ID" value="UER00317"/>
</dbReference>
<dbReference type="Proteomes" id="UP000001366">
    <property type="component" value="Chromosome"/>
</dbReference>
<dbReference type="GO" id="GO:0005737">
    <property type="term" value="C:cytoplasm"/>
    <property type="evidence" value="ECO:0007669"/>
    <property type="project" value="UniProtKB-SubCell"/>
</dbReference>
<dbReference type="GO" id="GO:0042286">
    <property type="term" value="F:glutamate-1-semialdehyde 2,1-aminomutase activity"/>
    <property type="evidence" value="ECO:0007669"/>
    <property type="project" value="UniProtKB-UniRule"/>
</dbReference>
<dbReference type="GO" id="GO:0030170">
    <property type="term" value="F:pyridoxal phosphate binding"/>
    <property type="evidence" value="ECO:0007669"/>
    <property type="project" value="InterPro"/>
</dbReference>
<dbReference type="GO" id="GO:0008483">
    <property type="term" value="F:transaminase activity"/>
    <property type="evidence" value="ECO:0007669"/>
    <property type="project" value="InterPro"/>
</dbReference>
<dbReference type="GO" id="GO:0006782">
    <property type="term" value="P:protoporphyrinogen IX biosynthetic process"/>
    <property type="evidence" value="ECO:0007669"/>
    <property type="project" value="UniProtKB-UniRule"/>
</dbReference>
<dbReference type="CDD" id="cd00610">
    <property type="entry name" value="OAT_like"/>
    <property type="match status" value="1"/>
</dbReference>
<dbReference type="FunFam" id="3.40.640.10:FF:000021">
    <property type="entry name" value="Glutamate-1-semialdehyde 2,1-aminomutase"/>
    <property type="match status" value="1"/>
</dbReference>
<dbReference type="Gene3D" id="3.90.1150.10">
    <property type="entry name" value="Aspartate Aminotransferase, domain 1"/>
    <property type="match status" value="1"/>
</dbReference>
<dbReference type="Gene3D" id="3.40.640.10">
    <property type="entry name" value="Type I PLP-dependent aspartate aminotransferase-like (Major domain)"/>
    <property type="match status" value="1"/>
</dbReference>
<dbReference type="HAMAP" id="MF_00375">
    <property type="entry name" value="HemL_aminotrans_3"/>
    <property type="match status" value="1"/>
</dbReference>
<dbReference type="InterPro" id="IPR004639">
    <property type="entry name" value="4pyrrol_synth_GluAld_NH2Trfase"/>
</dbReference>
<dbReference type="InterPro" id="IPR005814">
    <property type="entry name" value="Aminotrans_3"/>
</dbReference>
<dbReference type="InterPro" id="IPR049704">
    <property type="entry name" value="Aminotrans_3_PPA_site"/>
</dbReference>
<dbReference type="InterPro" id="IPR015424">
    <property type="entry name" value="PyrdxlP-dep_Trfase"/>
</dbReference>
<dbReference type="InterPro" id="IPR015421">
    <property type="entry name" value="PyrdxlP-dep_Trfase_major"/>
</dbReference>
<dbReference type="InterPro" id="IPR015422">
    <property type="entry name" value="PyrdxlP-dep_Trfase_small"/>
</dbReference>
<dbReference type="NCBIfam" id="TIGR00713">
    <property type="entry name" value="hemL"/>
    <property type="match status" value="1"/>
</dbReference>
<dbReference type="NCBIfam" id="NF000818">
    <property type="entry name" value="PRK00062.1"/>
    <property type="match status" value="1"/>
</dbReference>
<dbReference type="PANTHER" id="PTHR43713">
    <property type="entry name" value="GLUTAMATE-1-SEMIALDEHYDE 2,1-AMINOMUTASE"/>
    <property type="match status" value="1"/>
</dbReference>
<dbReference type="PANTHER" id="PTHR43713:SF3">
    <property type="entry name" value="GLUTAMATE-1-SEMIALDEHYDE 2,1-AMINOMUTASE 1, CHLOROPLASTIC-RELATED"/>
    <property type="match status" value="1"/>
</dbReference>
<dbReference type="Pfam" id="PF00202">
    <property type="entry name" value="Aminotran_3"/>
    <property type="match status" value="1"/>
</dbReference>
<dbReference type="SUPFAM" id="SSF53383">
    <property type="entry name" value="PLP-dependent transferases"/>
    <property type="match status" value="1"/>
</dbReference>
<dbReference type="PROSITE" id="PS00600">
    <property type="entry name" value="AA_TRANSFER_CLASS_3"/>
    <property type="match status" value="1"/>
</dbReference>
<feature type="chain" id="PRO_1000201028" description="Glutamate-1-semialdehyde 2,1-aminomutase">
    <location>
        <begin position="1"/>
        <end position="428"/>
    </location>
</feature>
<feature type="modified residue" description="N6-(pyridoxal phosphate)lysine" evidence="1">
    <location>
        <position position="267"/>
    </location>
</feature>
<accession>C0QQ98</accession>
<evidence type="ECO:0000255" key="1">
    <source>
        <dbReference type="HAMAP-Rule" id="MF_00375"/>
    </source>
</evidence>
<name>GSA_PERMH</name>
<organism>
    <name type="scientific">Persephonella marina (strain DSM 14350 / EX-H1)</name>
    <dbReference type="NCBI Taxonomy" id="123214"/>
    <lineage>
        <taxon>Bacteria</taxon>
        <taxon>Pseudomonadati</taxon>
        <taxon>Aquificota</taxon>
        <taxon>Aquificia</taxon>
        <taxon>Aquificales</taxon>
        <taxon>Hydrogenothermaceae</taxon>
        <taxon>Persephonella</taxon>
    </lineage>
</organism>